<feature type="chain" id="PRO_0000122009" description="Serine--tRNA ligase">
    <location>
        <begin position="1"/>
        <end position="428"/>
    </location>
</feature>
<feature type="binding site" evidence="1">
    <location>
        <begin position="231"/>
        <end position="233"/>
    </location>
    <ligand>
        <name>L-serine</name>
        <dbReference type="ChEBI" id="CHEBI:33384"/>
    </ligand>
</feature>
<feature type="binding site" evidence="1">
    <location>
        <begin position="262"/>
        <end position="264"/>
    </location>
    <ligand>
        <name>ATP</name>
        <dbReference type="ChEBI" id="CHEBI:30616"/>
    </ligand>
</feature>
<feature type="binding site" evidence="1">
    <location>
        <position position="278"/>
    </location>
    <ligand>
        <name>ATP</name>
        <dbReference type="ChEBI" id="CHEBI:30616"/>
    </ligand>
</feature>
<feature type="binding site" evidence="1">
    <location>
        <position position="285"/>
    </location>
    <ligand>
        <name>L-serine</name>
        <dbReference type="ChEBI" id="CHEBI:33384"/>
    </ligand>
</feature>
<feature type="binding site" evidence="1">
    <location>
        <begin position="349"/>
        <end position="352"/>
    </location>
    <ligand>
        <name>ATP</name>
        <dbReference type="ChEBI" id="CHEBI:30616"/>
    </ligand>
</feature>
<feature type="binding site" evidence="1">
    <location>
        <position position="384"/>
    </location>
    <ligand>
        <name>L-serine</name>
        <dbReference type="ChEBI" id="CHEBI:33384"/>
    </ligand>
</feature>
<accession>Q8G3W7</accession>
<evidence type="ECO:0000255" key="1">
    <source>
        <dbReference type="HAMAP-Rule" id="MF_00176"/>
    </source>
</evidence>
<sequence>MLDIQFIREHTDIVKESQRKRGESVELVDEVLSSDTARREALKAFEEARAQQKEIGKKVASAPADEKAKLIAETKELSQKVSEYKSKADSAAEEYTTAMWKLSNIVEPEAPEGGEDDYVVVKKVGQIRDFAAEGFEPKDHLTLGTGVAGIDMRRGVKVGGSRFYFLRGQVARMQIAMLTMAVDQAEEHGFTLAITPTLVRPEVMRGTGFLNSHADEIYRLREPDDQYLVGTSEVALAGMHENEILDLGNGPLRYCGWSSCYRREAGAAGKDTSGIIRVHQFDKVEMFVYAKQEDSYKEHEHLLAMEQEMLAKVEVPYRIIDTAAGDLGSSAARKFDCEAWVPTQGRYRELTSTSNCTEYQARRLNIRERMEDGGTRPVSTLNGTLATTRWLVAIMENHQQKDGSIEIPKAMRAYMGGKEVIEPTKWEA</sequence>
<dbReference type="EC" id="6.1.1.11" evidence="1"/>
<dbReference type="EMBL" id="AE014295">
    <property type="protein sequence ID" value="AAN25423.1"/>
    <property type="molecule type" value="Genomic_DNA"/>
</dbReference>
<dbReference type="RefSeq" id="NP_696787.1">
    <property type="nucleotide sequence ID" value="NC_004307.2"/>
</dbReference>
<dbReference type="RefSeq" id="WP_007052327.1">
    <property type="nucleotide sequence ID" value="NC_004307.2"/>
</dbReference>
<dbReference type="SMR" id="Q8G3W7"/>
<dbReference type="STRING" id="206672.BL1635"/>
<dbReference type="EnsemblBacteria" id="AAN25423">
    <property type="protein sequence ID" value="AAN25423"/>
    <property type="gene ID" value="BL1635"/>
</dbReference>
<dbReference type="GeneID" id="69578844"/>
<dbReference type="KEGG" id="blo:BL1635"/>
<dbReference type="PATRIC" id="fig|206672.9.peg.1690"/>
<dbReference type="HOGENOM" id="CLU_023797_0_1_11"/>
<dbReference type="OrthoDB" id="9804647at2"/>
<dbReference type="PhylomeDB" id="Q8G3W7"/>
<dbReference type="UniPathway" id="UPA00906">
    <property type="reaction ID" value="UER00895"/>
</dbReference>
<dbReference type="Proteomes" id="UP000000439">
    <property type="component" value="Chromosome"/>
</dbReference>
<dbReference type="GO" id="GO:0005737">
    <property type="term" value="C:cytoplasm"/>
    <property type="evidence" value="ECO:0007669"/>
    <property type="project" value="UniProtKB-SubCell"/>
</dbReference>
<dbReference type="GO" id="GO:0005524">
    <property type="term" value="F:ATP binding"/>
    <property type="evidence" value="ECO:0007669"/>
    <property type="project" value="UniProtKB-UniRule"/>
</dbReference>
<dbReference type="GO" id="GO:0004828">
    <property type="term" value="F:serine-tRNA ligase activity"/>
    <property type="evidence" value="ECO:0007669"/>
    <property type="project" value="UniProtKB-UniRule"/>
</dbReference>
<dbReference type="GO" id="GO:0016260">
    <property type="term" value="P:selenocysteine biosynthetic process"/>
    <property type="evidence" value="ECO:0007669"/>
    <property type="project" value="UniProtKB-UniRule"/>
</dbReference>
<dbReference type="GO" id="GO:0006434">
    <property type="term" value="P:seryl-tRNA aminoacylation"/>
    <property type="evidence" value="ECO:0007669"/>
    <property type="project" value="UniProtKB-UniRule"/>
</dbReference>
<dbReference type="Gene3D" id="3.30.930.10">
    <property type="entry name" value="Bira Bifunctional Protein, Domain 2"/>
    <property type="match status" value="1"/>
</dbReference>
<dbReference type="Gene3D" id="1.10.287.40">
    <property type="entry name" value="Serine-tRNA synthetase, tRNA binding domain"/>
    <property type="match status" value="1"/>
</dbReference>
<dbReference type="HAMAP" id="MF_00176">
    <property type="entry name" value="Ser_tRNA_synth_type1"/>
    <property type="match status" value="1"/>
</dbReference>
<dbReference type="InterPro" id="IPR002314">
    <property type="entry name" value="aa-tRNA-synt_IIb"/>
</dbReference>
<dbReference type="InterPro" id="IPR006195">
    <property type="entry name" value="aa-tRNA-synth_II"/>
</dbReference>
<dbReference type="InterPro" id="IPR045864">
    <property type="entry name" value="aa-tRNA-synth_II/BPL/LPL"/>
</dbReference>
<dbReference type="InterPro" id="IPR002317">
    <property type="entry name" value="Ser-tRNA-ligase_type_1"/>
</dbReference>
<dbReference type="InterPro" id="IPR015866">
    <property type="entry name" value="Ser-tRNA-synth_1_N"/>
</dbReference>
<dbReference type="InterPro" id="IPR042103">
    <property type="entry name" value="SerRS_1_N_sf"/>
</dbReference>
<dbReference type="InterPro" id="IPR010978">
    <property type="entry name" value="tRNA-bd_arm"/>
</dbReference>
<dbReference type="NCBIfam" id="TIGR00414">
    <property type="entry name" value="serS"/>
    <property type="match status" value="1"/>
</dbReference>
<dbReference type="PANTHER" id="PTHR11778">
    <property type="entry name" value="SERYL-TRNA SYNTHETASE"/>
    <property type="match status" value="1"/>
</dbReference>
<dbReference type="Pfam" id="PF02403">
    <property type="entry name" value="Seryl_tRNA_N"/>
    <property type="match status" value="1"/>
</dbReference>
<dbReference type="Pfam" id="PF00587">
    <property type="entry name" value="tRNA-synt_2b"/>
    <property type="match status" value="1"/>
</dbReference>
<dbReference type="PIRSF" id="PIRSF001529">
    <property type="entry name" value="Ser-tRNA-synth_IIa"/>
    <property type="match status" value="1"/>
</dbReference>
<dbReference type="PRINTS" id="PR00981">
    <property type="entry name" value="TRNASYNTHSER"/>
</dbReference>
<dbReference type="SUPFAM" id="SSF55681">
    <property type="entry name" value="Class II aaRS and biotin synthetases"/>
    <property type="match status" value="1"/>
</dbReference>
<dbReference type="SUPFAM" id="SSF46589">
    <property type="entry name" value="tRNA-binding arm"/>
    <property type="match status" value="1"/>
</dbReference>
<dbReference type="PROSITE" id="PS50862">
    <property type="entry name" value="AA_TRNA_LIGASE_II"/>
    <property type="match status" value="1"/>
</dbReference>
<organism>
    <name type="scientific">Bifidobacterium longum (strain NCC 2705)</name>
    <dbReference type="NCBI Taxonomy" id="206672"/>
    <lineage>
        <taxon>Bacteria</taxon>
        <taxon>Bacillati</taxon>
        <taxon>Actinomycetota</taxon>
        <taxon>Actinomycetes</taxon>
        <taxon>Bifidobacteriales</taxon>
        <taxon>Bifidobacteriaceae</taxon>
        <taxon>Bifidobacterium</taxon>
    </lineage>
</organism>
<gene>
    <name evidence="1" type="primary">serS</name>
    <name type="ordered locus">BL1635</name>
</gene>
<proteinExistence type="inferred from homology"/>
<protein>
    <recommendedName>
        <fullName evidence="1">Serine--tRNA ligase</fullName>
        <ecNumber evidence="1">6.1.1.11</ecNumber>
    </recommendedName>
    <alternativeName>
        <fullName evidence="1">Seryl-tRNA synthetase</fullName>
        <shortName evidence="1">SerRS</shortName>
    </alternativeName>
    <alternativeName>
        <fullName evidence="1">Seryl-tRNA(Ser/Sec) synthetase</fullName>
    </alternativeName>
</protein>
<comment type="function">
    <text evidence="1">Catalyzes the attachment of serine to tRNA(Ser). Is also able to aminoacylate tRNA(Sec) with serine, to form the misacylated tRNA L-seryl-tRNA(Sec), which will be further converted into selenocysteinyl-tRNA(Sec).</text>
</comment>
<comment type="catalytic activity">
    <reaction evidence="1">
        <text>tRNA(Ser) + L-serine + ATP = L-seryl-tRNA(Ser) + AMP + diphosphate + H(+)</text>
        <dbReference type="Rhea" id="RHEA:12292"/>
        <dbReference type="Rhea" id="RHEA-COMP:9669"/>
        <dbReference type="Rhea" id="RHEA-COMP:9703"/>
        <dbReference type="ChEBI" id="CHEBI:15378"/>
        <dbReference type="ChEBI" id="CHEBI:30616"/>
        <dbReference type="ChEBI" id="CHEBI:33019"/>
        <dbReference type="ChEBI" id="CHEBI:33384"/>
        <dbReference type="ChEBI" id="CHEBI:78442"/>
        <dbReference type="ChEBI" id="CHEBI:78533"/>
        <dbReference type="ChEBI" id="CHEBI:456215"/>
        <dbReference type="EC" id="6.1.1.11"/>
    </reaction>
</comment>
<comment type="catalytic activity">
    <reaction evidence="1">
        <text>tRNA(Sec) + L-serine + ATP = L-seryl-tRNA(Sec) + AMP + diphosphate + H(+)</text>
        <dbReference type="Rhea" id="RHEA:42580"/>
        <dbReference type="Rhea" id="RHEA-COMP:9742"/>
        <dbReference type="Rhea" id="RHEA-COMP:10128"/>
        <dbReference type="ChEBI" id="CHEBI:15378"/>
        <dbReference type="ChEBI" id="CHEBI:30616"/>
        <dbReference type="ChEBI" id="CHEBI:33019"/>
        <dbReference type="ChEBI" id="CHEBI:33384"/>
        <dbReference type="ChEBI" id="CHEBI:78442"/>
        <dbReference type="ChEBI" id="CHEBI:78533"/>
        <dbReference type="ChEBI" id="CHEBI:456215"/>
        <dbReference type="EC" id="6.1.1.11"/>
    </reaction>
</comment>
<comment type="pathway">
    <text evidence="1">Aminoacyl-tRNA biosynthesis; selenocysteinyl-tRNA(Sec) biosynthesis; L-seryl-tRNA(Sec) from L-serine and tRNA(Sec): step 1/1.</text>
</comment>
<comment type="subunit">
    <text evidence="1">Homodimer. The tRNA molecule binds across the dimer.</text>
</comment>
<comment type="subcellular location">
    <subcellularLocation>
        <location evidence="1">Cytoplasm</location>
    </subcellularLocation>
</comment>
<comment type="domain">
    <text evidence="1">Consists of two distinct domains, a catalytic core and a N-terminal extension that is involved in tRNA binding.</text>
</comment>
<comment type="similarity">
    <text evidence="1">Belongs to the class-II aminoacyl-tRNA synthetase family. Type-1 seryl-tRNA synthetase subfamily.</text>
</comment>
<name>SYS_BIFLO</name>
<keyword id="KW-0030">Aminoacyl-tRNA synthetase</keyword>
<keyword id="KW-0067">ATP-binding</keyword>
<keyword id="KW-0963">Cytoplasm</keyword>
<keyword id="KW-0436">Ligase</keyword>
<keyword id="KW-0547">Nucleotide-binding</keyword>
<keyword id="KW-0648">Protein biosynthesis</keyword>
<keyword id="KW-1185">Reference proteome</keyword>
<reference key="1">
    <citation type="journal article" date="2002" name="Proc. Natl. Acad. Sci. U.S.A.">
        <title>The genome sequence of Bifidobacterium longum reflects its adaptation to the human gastrointestinal tract.</title>
        <authorList>
            <person name="Schell M.A."/>
            <person name="Karmirantzou M."/>
            <person name="Snel B."/>
            <person name="Vilanova D."/>
            <person name="Berger B."/>
            <person name="Pessi G."/>
            <person name="Zwahlen M.-C."/>
            <person name="Desiere F."/>
            <person name="Bork P."/>
            <person name="Delley M."/>
            <person name="Pridmore R.D."/>
            <person name="Arigoni F."/>
        </authorList>
    </citation>
    <scope>NUCLEOTIDE SEQUENCE [LARGE SCALE GENOMIC DNA]</scope>
    <source>
        <strain>NCC 2705</strain>
    </source>
</reference>